<proteinExistence type="inferred from homology"/>
<comment type="function">
    <text evidence="1">Catalyzes the reversible hydration of cis-homoaconitate to (2R,3S)-homoisocitrate, a step in the alpha-aminoadipate pathway for lysine biosynthesis.</text>
</comment>
<comment type="catalytic activity">
    <reaction>
        <text>(2R,3S)-homoisocitrate = cis-homoaconitate + H2O</text>
        <dbReference type="Rhea" id="RHEA:15485"/>
        <dbReference type="ChEBI" id="CHEBI:15377"/>
        <dbReference type="ChEBI" id="CHEBI:15404"/>
        <dbReference type="ChEBI" id="CHEBI:58174"/>
        <dbReference type="EC" id="4.2.1.36"/>
    </reaction>
</comment>
<comment type="cofactor">
    <cofactor evidence="1">
        <name>[4Fe-4S] cluster</name>
        <dbReference type="ChEBI" id="CHEBI:49883"/>
    </cofactor>
    <text evidence="1">Binds 1 [4Fe-4S] cluster per subunit.</text>
</comment>
<comment type="pathway">
    <text>Amino-acid biosynthesis; L-lysine biosynthesis via AAA pathway; L-alpha-aminoadipate from 2-oxoglutarate: step 3/5.</text>
</comment>
<comment type="subcellular location">
    <subcellularLocation>
        <location evidence="1">Mitochondrion</location>
    </subcellularLocation>
</comment>
<comment type="similarity">
    <text evidence="4">Belongs to the aconitase/IPM isomerase family.</text>
</comment>
<name>LYS4_YARLI</name>
<gene>
    <name type="primary">LYS4</name>
    <name type="ordered locus">YALI0E02728g</name>
</gene>
<keyword id="KW-0028">Amino-acid biosynthesis</keyword>
<keyword id="KW-0408">Iron</keyword>
<keyword id="KW-0411">Iron-sulfur</keyword>
<keyword id="KW-0456">Lyase</keyword>
<keyword id="KW-0457">Lysine biosynthesis</keyword>
<keyword id="KW-0479">Metal-binding</keyword>
<keyword id="KW-0496">Mitochondrion</keyword>
<keyword id="KW-1185">Reference proteome</keyword>
<keyword id="KW-0809">Transit peptide</keyword>
<dbReference type="EC" id="4.2.1.36"/>
<dbReference type="EMBL" id="CR382131">
    <property type="protein sequence ID" value="CAG79050.1"/>
    <property type="molecule type" value="Genomic_DNA"/>
</dbReference>
<dbReference type="RefSeq" id="XP_503471.1">
    <property type="nucleotide sequence ID" value="XM_503471.1"/>
</dbReference>
<dbReference type="SMR" id="Q6C791"/>
<dbReference type="FunCoup" id="Q6C791">
    <property type="interactions" value="131"/>
</dbReference>
<dbReference type="STRING" id="284591.Q6C791"/>
<dbReference type="EnsemblFungi" id="CAG79050">
    <property type="protein sequence ID" value="CAG79050"/>
    <property type="gene ID" value="YALI0_E02728g"/>
</dbReference>
<dbReference type="KEGG" id="yli:2912118"/>
<dbReference type="VEuPathDB" id="FungiDB:YALI0_E02728g"/>
<dbReference type="HOGENOM" id="CLU_006714_3_1_1"/>
<dbReference type="InParanoid" id="Q6C791"/>
<dbReference type="OMA" id="LCDADNI"/>
<dbReference type="OrthoDB" id="82764at4891"/>
<dbReference type="UniPathway" id="UPA00033">
    <property type="reaction ID" value="UER01027"/>
</dbReference>
<dbReference type="Proteomes" id="UP000001300">
    <property type="component" value="Chromosome E"/>
</dbReference>
<dbReference type="GO" id="GO:0005759">
    <property type="term" value="C:mitochondrial matrix"/>
    <property type="evidence" value="ECO:0007669"/>
    <property type="project" value="EnsemblFungi"/>
</dbReference>
<dbReference type="GO" id="GO:0051539">
    <property type="term" value="F:4 iron, 4 sulfur cluster binding"/>
    <property type="evidence" value="ECO:0007669"/>
    <property type="project" value="InterPro"/>
</dbReference>
<dbReference type="GO" id="GO:0004409">
    <property type="term" value="F:homoaconitate hydratase activity"/>
    <property type="evidence" value="ECO:0007669"/>
    <property type="project" value="UniProtKB-EC"/>
</dbReference>
<dbReference type="GO" id="GO:0046872">
    <property type="term" value="F:metal ion binding"/>
    <property type="evidence" value="ECO:0007669"/>
    <property type="project" value="UniProtKB-KW"/>
</dbReference>
<dbReference type="GO" id="GO:0019878">
    <property type="term" value="P:lysine biosynthetic process via aminoadipic acid"/>
    <property type="evidence" value="ECO:0007669"/>
    <property type="project" value="UniProtKB-UniPathway"/>
</dbReference>
<dbReference type="CDD" id="cd01674">
    <property type="entry name" value="Homoaconitase_Swivel"/>
    <property type="match status" value="1"/>
</dbReference>
<dbReference type="FunFam" id="3.30.499.10:FF:000013">
    <property type="entry name" value="Homoaconitase, mitochondrial"/>
    <property type="match status" value="1"/>
</dbReference>
<dbReference type="Gene3D" id="3.30.499.10">
    <property type="entry name" value="Aconitase, domain 3"/>
    <property type="match status" value="2"/>
</dbReference>
<dbReference type="Gene3D" id="3.20.19.10">
    <property type="entry name" value="Aconitase, domain 4"/>
    <property type="match status" value="1"/>
</dbReference>
<dbReference type="InterPro" id="IPR015931">
    <property type="entry name" value="Acnase/IPM_dHydase_lsu_aba_1/3"/>
</dbReference>
<dbReference type="InterPro" id="IPR001030">
    <property type="entry name" value="Acoase/IPM_deHydtase_lsu_aba"/>
</dbReference>
<dbReference type="InterPro" id="IPR015928">
    <property type="entry name" value="Aconitase/3IPM_dehydase_swvl"/>
</dbReference>
<dbReference type="InterPro" id="IPR018136">
    <property type="entry name" value="Aconitase_4Fe-4S_BS"/>
</dbReference>
<dbReference type="InterPro" id="IPR036008">
    <property type="entry name" value="Aconitase_4Fe-4S_dom"/>
</dbReference>
<dbReference type="InterPro" id="IPR000573">
    <property type="entry name" value="AconitaseA/IPMdHydase_ssu_swvl"/>
</dbReference>
<dbReference type="InterPro" id="IPR004418">
    <property type="entry name" value="Homoaconitase_mito"/>
</dbReference>
<dbReference type="InterPro" id="IPR039386">
    <property type="entry name" value="Homoaconitase_swivel"/>
</dbReference>
<dbReference type="InterPro" id="IPR050067">
    <property type="entry name" value="IPM_dehydratase_rel_enz"/>
</dbReference>
<dbReference type="NCBIfam" id="TIGR00139">
    <property type="entry name" value="h_aconitase"/>
    <property type="match status" value="1"/>
</dbReference>
<dbReference type="PANTHER" id="PTHR43822:SF2">
    <property type="entry name" value="HOMOACONITASE, MITOCHONDRIAL"/>
    <property type="match status" value="1"/>
</dbReference>
<dbReference type="PANTHER" id="PTHR43822">
    <property type="entry name" value="HOMOACONITASE, MITOCHONDRIAL-RELATED"/>
    <property type="match status" value="1"/>
</dbReference>
<dbReference type="Pfam" id="PF00330">
    <property type="entry name" value="Aconitase"/>
    <property type="match status" value="1"/>
</dbReference>
<dbReference type="Pfam" id="PF00694">
    <property type="entry name" value="Aconitase_C"/>
    <property type="match status" value="1"/>
</dbReference>
<dbReference type="PRINTS" id="PR00415">
    <property type="entry name" value="ACONITASE"/>
</dbReference>
<dbReference type="SUPFAM" id="SSF53732">
    <property type="entry name" value="Aconitase iron-sulfur domain"/>
    <property type="match status" value="1"/>
</dbReference>
<dbReference type="SUPFAM" id="SSF52016">
    <property type="entry name" value="LeuD/IlvD-like"/>
    <property type="match status" value="1"/>
</dbReference>
<dbReference type="PROSITE" id="PS00450">
    <property type="entry name" value="ACONITASE_1"/>
    <property type="match status" value="1"/>
</dbReference>
<dbReference type="PROSITE" id="PS01244">
    <property type="entry name" value="ACONITASE_2"/>
    <property type="match status" value="1"/>
</dbReference>
<evidence type="ECO:0000250" key="1"/>
<evidence type="ECO:0000255" key="2"/>
<evidence type="ECO:0000256" key="3">
    <source>
        <dbReference type="SAM" id="MobiDB-lite"/>
    </source>
</evidence>
<evidence type="ECO:0000305" key="4"/>
<organism>
    <name type="scientific">Yarrowia lipolytica (strain CLIB 122 / E 150)</name>
    <name type="common">Yeast</name>
    <name type="synonym">Candida lipolytica</name>
    <dbReference type="NCBI Taxonomy" id="284591"/>
    <lineage>
        <taxon>Eukaryota</taxon>
        <taxon>Fungi</taxon>
        <taxon>Dikarya</taxon>
        <taxon>Ascomycota</taxon>
        <taxon>Saccharomycotina</taxon>
        <taxon>Dipodascomycetes</taxon>
        <taxon>Dipodascales</taxon>
        <taxon>Dipodascales incertae sedis</taxon>
        <taxon>Yarrowia</taxon>
    </lineage>
</organism>
<accession>Q6C791</accession>
<reference key="1">
    <citation type="journal article" date="2004" name="Nature">
        <title>Genome evolution in yeasts.</title>
        <authorList>
            <person name="Dujon B."/>
            <person name="Sherman D."/>
            <person name="Fischer G."/>
            <person name="Durrens P."/>
            <person name="Casaregola S."/>
            <person name="Lafontaine I."/>
            <person name="de Montigny J."/>
            <person name="Marck C."/>
            <person name="Neuveglise C."/>
            <person name="Talla E."/>
            <person name="Goffard N."/>
            <person name="Frangeul L."/>
            <person name="Aigle M."/>
            <person name="Anthouard V."/>
            <person name="Babour A."/>
            <person name="Barbe V."/>
            <person name="Barnay S."/>
            <person name="Blanchin S."/>
            <person name="Beckerich J.-M."/>
            <person name="Beyne E."/>
            <person name="Bleykasten C."/>
            <person name="Boisrame A."/>
            <person name="Boyer J."/>
            <person name="Cattolico L."/>
            <person name="Confanioleri F."/>
            <person name="de Daruvar A."/>
            <person name="Despons L."/>
            <person name="Fabre E."/>
            <person name="Fairhead C."/>
            <person name="Ferry-Dumazet H."/>
            <person name="Groppi A."/>
            <person name="Hantraye F."/>
            <person name="Hennequin C."/>
            <person name="Jauniaux N."/>
            <person name="Joyet P."/>
            <person name="Kachouri R."/>
            <person name="Kerrest A."/>
            <person name="Koszul R."/>
            <person name="Lemaire M."/>
            <person name="Lesur I."/>
            <person name="Ma L."/>
            <person name="Muller H."/>
            <person name="Nicaud J.-M."/>
            <person name="Nikolski M."/>
            <person name="Oztas S."/>
            <person name="Ozier-Kalogeropoulos O."/>
            <person name="Pellenz S."/>
            <person name="Potier S."/>
            <person name="Richard G.-F."/>
            <person name="Straub M.-L."/>
            <person name="Suleau A."/>
            <person name="Swennen D."/>
            <person name="Tekaia F."/>
            <person name="Wesolowski-Louvel M."/>
            <person name="Westhof E."/>
            <person name="Wirth B."/>
            <person name="Zeniou-Meyer M."/>
            <person name="Zivanovic Y."/>
            <person name="Bolotin-Fukuhara M."/>
            <person name="Thierry A."/>
            <person name="Bouchier C."/>
            <person name="Caudron B."/>
            <person name="Scarpelli C."/>
            <person name="Gaillardin C."/>
            <person name="Weissenbach J."/>
            <person name="Wincker P."/>
            <person name="Souciet J.-L."/>
        </authorList>
    </citation>
    <scope>NUCLEOTIDE SEQUENCE [LARGE SCALE GENOMIC DNA]</scope>
    <source>
        <strain>CLIB 122 / E 150</strain>
    </source>
</reference>
<sequence>MFAFRNRAVTQTLLVRRYSTKRIPQNLTEKIVQRYAVGLPEGKQVQSGDYVSIRPSHCMTHDNSWPVATKFKGLGAKAVKDNRQVVMTLDHDVQNKSEKNLEKYANIENFAGEQGIDFYPAGRGIGHQVMVEEGYAFPYNLTVASDSHSNMYGGIGCLGTPIVRTDAASVWATGQTWWQIPPVARVELKGQLPAGVFGKDVIIALCGIFNNDEVLNHAIEFVGDGVEHLSVDERLTIANMTTEWGALTGLFPVDETLRQWYEYRLTRLPQPHARVNDGTVAALKDAVQADTDAKYAKNLTIDLSTLSPFLSGPNSVKVYNSLADLSAQDIKINKAYLVSCTNSRLSDIEAAANVIKNNKVAEGVEFYVAAASSFVQKDAEASGAWQTLINAGAKPLPAGCGPCIGLGTGLLEDGEVGISATNRNFKGRMGSKDALAYLASPEVVAASAVLGKIGFPEEVYGSPVPGAKGVSSSISVTEAVEAEADAEAAESDPAPSGGVLDGFPAQITGELVLCDADNINTDGIYPGKYTYQDDVPREKMAEVCMENYDPDFGSKTGAGDIIVSGFNFGTGSSREQAATCILARDMQLVIAGSFGNIFSRNSINNALLTLEIPALINKLRKRYEGQPAELTRRTGWFATWDVPAATVTVTDGKNGPVILKQKVGELGQNLQEIIVKGGLEGWVKAQL</sequence>
<protein>
    <recommendedName>
        <fullName>Homoaconitase, mitochondrial</fullName>
        <ecNumber>4.2.1.36</ecNumber>
    </recommendedName>
    <alternativeName>
        <fullName>Homoaconitate hydratase</fullName>
    </alternativeName>
</protein>
<feature type="transit peptide" description="Mitochondrion" evidence="2">
    <location>
        <begin position="1"/>
        <end position="18"/>
    </location>
</feature>
<feature type="chain" id="PRO_0000247929" description="Homoaconitase, mitochondrial">
    <location>
        <begin position="19"/>
        <end position="687"/>
    </location>
</feature>
<feature type="region of interest" description="Disordered" evidence="3">
    <location>
        <begin position="481"/>
        <end position="500"/>
    </location>
</feature>
<feature type="compositionally biased region" description="Acidic residues" evidence="3">
    <location>
        <begin position="481"/>
        <end position="490"/>
    </location>
</feature>
<feature type="binding site" evidence="1">
    <location>
        <position position="340"/>
    </location>
    <ligand>
        <name>[4Fe-4S] cluster</name>
        <dbReference type="ChEBI" id="CHEBI:49883"/>
    </ligand>
</feature>
<feature type="binding site" evidence="1">
    <location>
        <position position="400"/>
    </location>
    <ligand>
        <name>[4Fe-4S] cluster</name>
        <dbReference type="ChEBI" id="CHEBI:49883"/>
    </ligand>
</feature>
<feature type="binding site" evidence="1">
    <location>
        <position position="403"/>
    </location>
    <ligand>
        <name>[4Fe-4S] cluster</name>
        <dbReference type="ChEBI" id="CHEBI:49883"/>
    </ligand>
</feature>